<accession>A4VUL1</accession>
<name>TYSY_STRSY</name>
<protein>
    <recommendedName>
        <fullName evidence="1">Thymidylate synthase</fullName>
        <shortName evidence="1">TS</shortName>
        <shortName evidence="1">TSase</shortName>
        <ecNumber evidence="1">2.1.1.45</ecNumber>
    </recommendedName>
</protein>
<feature type="chain" id="PRO_1000000696" description="Thymidylate synthase">
    <location>
        <begin position="1"/>
        <end position="279"/>
    </location>
</feature>
<feature type="active site" description="Nucleophile" evidence="1">
    <location>
        <position position="154"/>
    </location>
</feature>
<feature type="binding site" evidence="1">
    <location>
        <begin position="133"/>
        <end position="134"/>
    </location>
    <ligand>
        <name>dUMP</name>
        <dbReference type="ChEBI" id="CHEBI:246422"/>
        <note>ligand shared between dimeric partners</note>
    </ligand>
</feature>
<feature type="binding site" description="in other chain" evidence="1">
    <location>
        <begin position="178"/>
        <end position="181"/>
    </location>
    <ligand>
        <name>dUMP</name>
        <dbReference type="ChEBI" id="CHEBI:246422"/>
        <note>ligand shared between dimeric partners</note>
    </ligand>
</feature>
<feature type="binding site" evidence="1">
    <location>
        <position position="181"/>
    </location>
    <ligand>
        <name>(6R)-5,10-methylene-5,6,7,8-tetrahydrofolate</name>
        <dbReference type="ChEBI" id="CHEBI:15636"/>
    </ligand>
</feature>
<feature type="binding site" description="in other chain" evidence="1">
    <location>
        <position position="189"/>
    </location>
    <ligand>
        <name>dUMP</name>
        <dbReference type="ChEBI" id="CHEBI:246422"/>
        <note>ligand shared between dimeric partners</note>
    </ligand>
</feature>
<feature type="binding site" description="in other chain" evidence="1">
    <location>
        <begin position="219"/>
        <end position="221"/>
    </location>
    <ligand>
        <name>dUMP</name>
        <dbReference type="ChEBI" id="CHEBI:246422"/>
        <note>ligand shared between dimeric partners</note>
    </ligand>
</feature>
<feature type="binding site" evidence="1">
    <location>
        <position position="278"/>
    </location>
    <ligand>
        <name>(6R)-5,10-methylene-5,6,7,8-tetrahydrofolate</name>
        <dbReference type="ChEBI" id="CHEBI:15636"/>
    </ligand>
</feature>
<evidence type="ECO:0000255" key="1">
    <source>
        <dbReference type="HAMAP-Rule" id="MF_00008"/>
    </source>
</evidence>
<reference key="1">
    <citation type="journal article" date="2007" name="PLoS ONE">
        <title>A glimpse of streptococcal toxic shock syndrome from comparative genomics of S. suis 2 Chinese isolates.</title>
        <authorList>
            <person name="Chen C."/>
            <person name="Tang J."/>
            <person name="Dong W."/>
            <person name="Wang C."/>
            <person name="Feng Y."/>
            <person name="Wang J."/>
            <person name="Zheng F."/>
            <person name="Pan X."/>
            <person name="Liu D."/>
            <person name="Li M."/>
            <person name="Song Y."/>
            <person name="Zhu X."/>
            <person name="Sun H."/>
            <person name="Feng T."/>
            <person name="Guo Z."/>
            <person name="Ju A."/>
            <person name="Ge J."/>
            <person name="Dong Y."/>
            <person name="Sun W."/>
            <person name="Jiang Y."/>
            <person name="Wang J."/>
            <person name="Yan J."/>
            <person name="Yang H."/>
            <person name="Wang X."/>
            <person name="Gao G.F."/>
            <person name="Yang R."/>
            <person name="Wang J."/>
            <person name="Yu J."/>
        </authorList>
    </citation>
    <scope>NUCLEOTIDE SEQUENCE [LARGE SCALE GENOMIC DNA]</scope>
    <source>
        <strain>05ZYH33</strain>
    </source>
</reference>
<organism>
    <name type="scientific">Streptococcus suis (strain 05ZYH33)</name>
    <dbReference type="NCBI Taxonomy" id="391295"/>
    <lineage>
        <taxon>Bacteria</taxon>
        <taxon>Bacillati</taxon>
        <taxon>Bacillota</taxon>
        <taxon>Bacilli</taxon>
        <taxon>Lactobacillales</taxon>
        <taxon>Streptococcaceae</taxon>
        <taxon>Streptococcus</taxon>
    </lineage>
</organism>
<sequence>MTKADIIFKENIRKIMEEGVFSENARPRYKDGNVANSKYVTGAFAEYDLSKGEFPITTLRPIPIKSAIKEILWIYQDQTNDLSVLQEKYGVQYWNDWEVEGTGTIGERYGAIVKKHDIISKILKQLEENPWNRRNVISLWDYEAFDQSAGLLPCAFQTLFDVRRVDGEIYLDATLTQRSNDMLVAHHINAMQYVALQMMIAKHFGWKVGKFFYFINNLHIYDNQFEQAEELLRRTPSEVEPRLVLNVPDGTNFFDIRAEDFELVDYNPVKPQLKFDLAI</sequence>
<comment type="function">
    <text evidence="1">Catalyzes the reductive methylation of 2'-deoxyuridine-5'-monophosphate (dUMP) to 2'-deoxythymidine-5'-monophosphate (dTMP) while utilizing 5,10-methylenetetrahydrofolate (mTHF) as the methyl donor and reductant in the reaction, yielding dihydrofolate (DHF) as a by-product. This enzymatic reaction provides an intracellular de novo source of dTMP, an essential precursor for DNA biosynthesis.</text>
</comment>
<comment type="catalytic activity">
    <reaction evidence="1">
        <text>dUMP + (6R)-5,10-methylene-5,6,7,8-tetrahydrofolate = 7,8-dihydrofolate + dTMP</text>
        <dbReference type="Rhea" id="RHEA:12104"/>
        <dbReference type="ChEBI" id="CHEBI:15636"/>
        <dbReference type="ChEBI" id="CHEBI:57451"/>
        <dbReference type="ChEBI" id="CHEBI:63528"/>
        <dbReference type="ChEBI" id="CHEBI:246422"/>
        <dbReference type="EC" id="2.1.1.45"/>
    </reaction>
</comment>
<comment type="pathway">
    <text evidence="1">Pyrimidine metabolism; dTTP biosynthesis.</text>
</comment>
<comment type="subunit">
    <text evidence="1">Homodimer.</text>
</comment>
<comment type="subcellular location">
    <subcellularLocation>
        <location evidence="1">Cytoplasm</location>
    </subcellularLocation>
</comment>
<comment type="similarity">
    <text evidence="1">Belongs to the thymidylate synthase family. Bacterial-type ThyA subfamily.</text>
</comment>
<keyword id="KW-0963">Cytoplasm</keyword>
<keyword id="KW-0489">Methyltransferase</keyword>
<keyword id="KW-0545">Nucleotide biosynthesis</keyword>
<keyword id="KW-0808">Transferase</keyword>
<dbReference type="EC" id="2.1.1.45" evidence="1"/>
<dbReference type="EMBL" id="CP000407">
    <property type="protein sequence ID" value="ABP89800.1"/>
    <property type="molecule type" value="Genomic_DNA"/>
</dbReference>
<dbReference type="SMR" id="A4VUL1"/>
<dbReference type="STRING" id="391295.SSU05_0834"/>
<dbReference type="KEGG" id="ssu:SSU05_0834"/>
<dbReference type="eggNOG" id="COG0207">
    <property type="taxonomic scope" value="Bacteria"/>
</dbReference>
<dbReference type="HOGENOM" id="CLU_021669_0_0_9"/>
<dbReference type="UniPathway" id="UPA00575"/>
<dbReference type="GO" id="GO:0005829">
    <property type="term" value="C:cytosol"/>
    <property type="evidence" value="ECO:0007669"/>
    <property type="project" value="TreeGrafter"/>
</dbReference>
<dbReference type="GO" id="GO:0004799">
    <property type="term" value="F:thymidylate synthase activity"/>
    <property type="evidence" value="ECO:0007669"/>
    <property type="project" value="UniProtKB-UniRule"/>
</dbReference>
<dbReference type="GO" id="GO:0006231">
    <property type="term" value="P:dTMP biosynthetic process"/>
    <property type="evidence" value="ECO:0007669"/>
    <property type="project" value="UniProtKB-UniRule"/>
</dbReference>
<dbReference type="GO" id="GO:0006235">
    <property type="term" value="P:dTTP biosynthetic process"/>
    <property type="evidence" value="ECO:0007669"/>
    <property type="project" value="UniProtKB-UniRule"/>
</dbReference>
<dbReference type="GO" id="GO:0032259">
    <property type="term" value="P:methylation"/>
    <property type="evidence" value="ECO:0007669"/>
    <property type="project" value="UniProtKB-KW"/>
</dbReference>
<dbReference type="CDD" id="cd00351">
    <property type="entry name" value="TS_Pyrimidine_HMase"/>
    <property type="match status" value="1"/>
</dbReference>
<dbReference type="Gene3D" id="3.30.572.10">
    <property type="entry name" value="Thymidylate synthase/dCMP hydroxymethylase domain"/>
    <property type="match status" value="1"/>
</dbReference>
<dbReference type="HAMAP" id="MF_00008">
    <property type="entry name" value="Thymidy_synth_bact"/>
    <property type="match status" value="1"/>
</dbReference>
<dbReference type="InterPro" id="IPR045097">
    <property type="entry name" value="Thymidate_synth/dCMP_Mease"/>
</dbReference>
<dbReference type="InterPro" id="IPR023451">
    <property type="entry name" value="Thymidate_synth/dCMP_Mease_dom"/>
</dbReference>
<dbReference type="InterPro" id="IPR036926">
    <property type="entry name" value="Thymidate_synth/dCMP_Mease_sf"/>
</dbReference>
<dbReference type="InterPro" id="IPR000398">
    <property type="entry name" value="Thymidylate_synthase"/>
</dbReference>
<dbReference type="InterPro" id="IPR020940">
    <property type="entry name" value="Thymidylate_synthase_AS"/>
</dbReference>
<dbReference type="NCBIfam" id="NF002495">
    <property type="entry name" value="PRK01827.1-1"/>
    <property type="match status" value="1"/>
</dbReference>
<dbReference type="PANTHER" id="PTHR11548">
    <property type="entry name" value="THYMIDYLATE SYNTHASE 1"/>
    <property type="match status" value="1"/>
</dbReference>
<dbReference type="PANTHER" id="PTHR11548:SF1">
    <property type="entry name" value="THYMIDYLATE SYNTHASE 1"/>
    <property type="match status" value="1"/>
</dbReference>
<dbReference type="Pfam" id="PF00303">
    <property type="entry name" value="Thymidylat_synt"/>
    <property type="match status" value="1"/>
</dbReference>
<dbReference type="PRINTS" id="PR00108">
    <property type="entry name" value="THYMDSNTHASE"/>
</dbReference>
<dbReference type="SUPFAM" id="SSF55831">
    <property type="entry name" value="Thymidylate synthase/dCMP hydroxymethylase"/>
    <property type="match status" value="1"/>
</dbReference>
<dbReference type="PROSITE" id="PS00091">
    <property type="entry name" value="THYMIDYLATE_SYNTHASE"/>
    <property type="match status" value="1"/>
</dbReference>
<gene>
    <name evidence="1" type="primary">thyA</name>
    <name type="ordered locus">SSU05_0834</name>
</gene>
<proteinExistence type="inferred from homology"/>